<keyword id="KW-0687">Ribonucleoprotein</keyword>
<keyword id="KW-0689">Ribosomal protein</keyword>
<feature type="chain" id="PRO_0000351997" description="Small ribosomal subunit protein uS2">
    <location>
        <begin position="1"/>
        <end position="248"/>
    </location>
</feature>
<comment type="similarity">
    <text evidence="1">Belongs to the universal ribosomal protein uS2 family.</text>
</comment>
<comment type="sequence caution" evidence="2">
    <conflict type="erroneous initiation">
        <sequence resource="EMBL-CDS" id="ABR89244"/>
    </conflict>
</comment>
<name>RS2_JANMA</name>
<gene>
    <name evidence="1" type="primary">rpsB</name>
    <name type="ordered locus">mma_2058</name>
</gene>
<organism>
    <name type="scientific">Janthinobacterium sp. (strain Marseille)</name>
    <name type="common">Minibacterium massiliensis</name>
    <dbReference type="NCBI Taxonomy" id="375286"/>
    <lineage>
        <taxon>Bacteria</taxon>
        <taxon>Pseudomonadati</taxon>
        <taxon>Pseudomonadota</taxon>
        <taxon>Betaproteobacteria</taxon>
        <taxon>Burkholderiales</taxon>
        <taxon>Oxalobacteraceae</taxon>
        <taxon>Janthinobacterium</taxon>
    </lineage>
</organism>
<sequence>MSVTMREMLEAGVHFGHQTRFWNPKMAPFIFGHRNRIHIVNLEKTMGMYQEAMKYIRQLSSNRGTVLFVGTKRQARETIAAEAQRAGMPYVDQRWLGGMLTNFKTIKTSIKRLKEMEASIEDGSVQKLSKKEALMFEREKIKLEKSIGGIKDMGGIPDAIFVVDVGYHKGAITEAAKLGIPVIGVVDTNHSPEGVTYVIPGNDDSSKAIMLYARGVADAILEGRANATNDLVESIKGGDDFVEVSEQA</sequence>
<dbReference type="EMBL" id="CP000269">
    <property type="protein sequence ID" value="ABR89244.1"/>
    <property type="status" value="ALT_INIT"/>
    <property type="molecule type" value="Genomic_DNA"/>
</dbReference>
<dbReference type="RefSeq" id="WP_041296527.1">
    <property type="nucleotide sequence ID" value="NC_009659.1"/>
</dbReference>
<dbReference type="SMR" id="A6SZQ1"/>
<dbReference type="STRING" id="375286.mma_2058"/>
<dbReference type="KEGG" id="mms:mma_2058"/>
<dbReference type="eggNOG" id="COG0052">
    <property type="taxonomic scope" value="Bacteria"/>
</dbReference>
<dbReference type="HOGENOM" id="CLU_040318_1_3_4"/>
<dbReference type="OrthoDB" id="9808036at2"/>
<dbReference type="Proteomes" id="UP000006388">
    <property type="component" value="Chromosome"/>
</dbReference>
<dbReference type="GO" id="GO:0022627">
    <property type="term" value="C:cytosolic small ribosomal subunit"/>
    <property type="evidence" value="ECO:0007669"/>
    <property type="project" value="TreeGrafter"/>
</dbReference>
<dbReference type="GO" id="GO:0003735">
    <property type="term" value="F:structural constituent of ribosome"/>
    <property type="evidence" value="ECO:0007669"/>
    <property type="project" value="InterPro"/>
</dbReference>
<dbReference type="GO" id="GO:0006412">
    <property type="term" value="P:translation"/>
    <property type="evidence" value="ECO:0007669"/>
    <property type="project" value="UniProtKB-UniRule"/>
</dbReference>
<dbReference type="CDD" id="cd01425">
    <property type="entry name" value="RPS2"/>
    <property type="match status" value="1"/>
</dbReference>
<dbReference type="FunFam" id="1.10.287.610:FF:000001">
    <property type="entry name" value="30S ribosomal protein S2"/>
    <property type="match status" value="1"/>
</dbReference>
<dbReference type="Gene3D" id="3.40.50.10490">
    <property type="entry name" value="Glucose-6-phosphate isomerase like protein, domain 1"/>
    <property type="match status" value="1"/>
</dbReference>
<dbReference type="Gene3D" id="1.10.287.610">
    <property type="entry name" value="Helix hairpin bin"/>
    <property type="match status" value="1"/>
</dbReference>
<dbReference type="HAMAP" id="MF_00291_B">
    <property type="entry name" value="Ribosomal_uS2_B"/>
    <property type="match status" value="1"/>
</dbReference>
<dbReference type="InterPro" id="IPR001865">
    <property type="entry name" value="Ribosomal_uS2"/>
</dbReference>
<dbReference type="InterPro" id="IPR005706">
    <property type="entry name" value="Ribosomal_uS2_bac/mit/plastid"/>
</dbReference>
<dbReference type="InterPro" id="IPR018130">
    <property type="entry name" value="Ribosomal_uS2_CS"/>
</dbReference>
<dbReference type="InterPro" id="IPR023591">
    <property type="entry name" value="Ribosomal_uS2_flav_dom_sf"/>
</dbReference>
<dbReference type="NCBIfam" id="TIGR01011">
    <property type="entry name" value="rpsB_bact"/>
    <property type="match status" value="1"/>
</dbReference>
<dbReference type="PANTHER" id="PTHR12534">
    <property type="entry name" value="30S RIBOSOMAL PROTEIN S2 PROKARYOTIC AND ORGANELLAR"/>
    <property type="match status" value="1"/>
</dbReference>
<dbReference type="PANTHER" id="PTHR12534:SF0">
    <property type="entry name" value="SMALL RIBOSOMAL SUBUNIT PROTEIN US2M"/>
    <property type="match status" value="1"/>
</dbReference>
<dbReference type="Pfam" id="PF00318">
    <property type="entry name" value="Ribosomal_S2"/>
    <property type="match status" value="1"/>
</dbReference>
<dbReference type="PRINTS" id="PR00395">
    <property type="entry name" value="RIBOSOMALS2"/>
</dbReference>
<dbReference type="SUPFAM" id="SSF52313">
    <property type="entry name" value="Ribosomal protein S2"/>
    <property type="match status" value="1"/>
</dbReference>
<dbReference type="PROSITE" id="PS00962">
    <property type="entry name" value="RIBOSOMAL_S2_1"/>
    <property type="match status" value="1"/>
</dbReference>
<protein>
    <recommendedName>
        <fullName evidence="1">Small ribosomal subunit protein uS2</fullName>
    </recommendedName>
    <alternativeName>
        <fullName evidence="2">30S ribosomal protein S2</fullName>
    </alternativeName>
</protein>
<accession>A6SZQ1</accession>
<proteinExistence type="inferred from homology"/>
<evidence type="ECO:0000255" key="1">
    <source>
        <dbReference type="HAMAP-Rule" id="MF_00291"/>
    </source>
</evidence>
<evidence type="ECO:0000305" key="2"/>
<reference key="1">
    <citation type="journal article" date="2007" name="PLoS Genet.">
        <title>Genome analysis of Minibacterium massiliensis highlights the convergent evolution of water-living bacteria.</title>
        <authorList>
            <person name="Audic S."/>
            <person name="Robert C."/>
            <person name="Campagna B."/>
            <person name="Parinello H."/>
            <person name="Claverie J.-M."/>
            <person name="Raoult D."/>
            <person name="Drancourt M."/>
        </authorList>
    </citation>
    <scope>NUCLEOTIDE SEQUENCE [LARGE SCALE GENOMIC DNA]</scope>
    <source>
        <strain>Marseille</strain>
    </source>
</reference>